<keyword id="KW-0694">RNA-binding</keyword>
<keyword id="KW-0804">Transcription</keyword>
<keyword id="KW-0889">Transcription antitermination</keyword>
<keyword id="KW-0805">Transcription regulation</keyword>
<protein>
    <recommendedName>
        <fullName evidence="1">Transcription antitermination protein NusB</fullName>
    </recommendedName>
    <alternativeName>
        <fullName evidence="1">Antitermination factor NusB</fullName>
    </alternativeName>
</protein>
<comment type="function">
    <text evidence="1">Involved in transcription antitermination. Required for transcription of ribosomal RNA (rRNA) genes. Binds specifically to the boxA antiterminator sequence of the ribosomal RNA (rrn) operons.</text>
</comment>
<comment type="similarity">
    <text evidence="1">Belongs to the NusB family.</text>
</comment>
<name>NUSB_XANOM</name>
<accession>Q2NZ92</accession>
<dbReference type="EMBL" id="AP008229">
    <property type="protein sequence ID" value="BAE70385.1"/>
    <property type="molecule type" value="Genomic_DNA"/>
</dbReference>
<dbReference type="RefSeq" id="WP_011260254.1">
    <property type="nucleotide sequence ID" value="NC_007705.1"/>
</dbReference>
<dbReference type="SMR" id="Q2NZ92"/>
<dbReference type="KEGG" id="xom:XOO3630"/>
<dbReference type="HOGENOM" id="CLU_087843_4_1_6"/>
<dbReference type="GO" id="GO:0005829">
    <property type="term" value="C:cytosol"/>
    <property type="evidence" value="ECO:0007669"/>
    <property type="project" value="TreeGrafter"/>
</dbReference>
<dbReference type="GO" id="GO:0003723">
    <property type="term" value="F:RNA binding"/>
    <property type="evidence" value="ECO:0007669"/>
    <property type="project" value="UniProtKB-UniRule"/>
</dbReference>
<dbReference type="GO" id="GO:0006353">
    <property type="term" value="P:DNA-templated transcription termination"/>
    <property type="evidence" value="ECO:0007669"/>
    <property type="project" value="UniProtKB-UniRule"/>
</dbReference>
<dbReference type="GO" id="GO:0031564">
    <property type="term" value="P:transcription antitermination"/>
    <property type="evidence" value="ECO:0007669"/>
    <property type="project" value="UniProtKB-KW"/>
</dbReference>
<dbReference type="FunFam" id="1.10.940.10:FF:000001">
    <property type="entry name" value="Transcription antitermination factor NusB"/>
    <property type="match status" value="1"/>
</dbReference>
<dbReference type="Gene3D" id="1.10.940.10">
    <property type="entry name" value="NusB-like"/>
    <property type="match status" value="1"/>
</dbReference>
<dbReference type="HAMAP" id="MF_00073">
    <property type="entry name" value="NusB"/>
    <property type="match status" value="1"/>
</dbReference>
<dbReference type="InterPro" id="IPR035926">
    <property type="entry name" value="NusB-like_sf"/>
</dbReference>
<dbReference type="InterPro" id="IPR011605">
    <property type="entry name" value="NusB_fam"/>
</dbReference>
<dbReference type="InterPro" id="IPR006027">
    <property type="entry name" value="NusB_RsmB_TIM44"/>
</dbReference>
<dbReference type="NCBIfam" id="TIGR01951">
    <property type="entry name" value="nusB"/>
    <property type="match status" value="1"/>
</dbReference>
<dbReference type="PANTHER" id="PTHR11078:SF3">
    <property type="entry name" value="ANTITERMINATION NUSB DOMAIN-CONTAINING PROTEIN"/>
    <property type="match status" value="1"/>
</dbReference>
<dbReference type="PANTHER" id="PTHR11078">
    <property type="entry name" value="N UTILIZATION SUBSTANCE PROTEIN B-RELATED"/>
    <property type="match status" value="1"/>
</dbReference>
<dbReference type="Pfam" id="PF01029">
    <property type="entry name" value="NusB"/>
    <property type="match status" value="1"/>
</dbReference>
<dbReference type="SUPFAM" id="SSF48013">
    <property type="entry name" value="NusB-like"/>
    <property type="match status" value="1"/>
</dbReference>
<feature type="chain" id="PRO_0000265628" description="Transcription antitermination protein NusB">
    <location>
        <begin position="1"/>
        <end position="156"/>
    </location>
</feature>
<gene>
    <name evidence="1" type="primary">nusB</name>
    <name type="ordered locus">XOO3630</name>
</gene>
<evidence type="ECO:0000255" key="1">
    <source>
        <dbReference type="HAMAP-Rule" id="MF_00073"/>
    </source>
</evidence>
<reference key="1">
    <citation type="journal article" date="2005" name="Jpn. Agric. Res. Q.">
        <title>Genome sequence of Xanthomonas oryzae pv. oryzae suggests contribution of large numbers of effector genes and insertion sequences to its race diversity.</title>
        <authorList>
            <person name="Ochiai H."/>
            <person name="Inoue Y."/>
            <person name="Takeya M."/>
            <person name="Sasaki A."/>
            <person name="Kaku H."/>
        </authorList>
    </citation>
    <scope>NUCLEOTIDE SEQUENCE [LARGE SCALE GENOMIC DNA]</scope>
    <source>
        <strain>MAFF 311018</strain>
    </source>
</reference>
<organism>
    <name type="scientific">Xanthomonas oryzae pv. oryzae (strain MAFF 311018)</name>
    <dbReference type="NCBI Taxonomy" id="342109"/>
    <lineage>
        <taxon>Bacteria</taxon>
        <taxon>Pseudomonadati</taxon>
        <taxon>Pseudomonadota</taxon>
        <taxon>Gammaproteobacteria</taxon>
        <taxon>Lysobacterales</taxon>
        <taxon>Lysobacteraceae</taxon>
        <taxon>Xanthomonas</taxon>
    </lineage>
</organism>
<sequence>MSKPGGHPRHGRRDGIDPVLRSRARRRALQAVYAWQISGGFAKQVIAQFAHEQAHEVADLAYFENLVEGVLTNRAELDTALTPYLDRGVEEVDAIERAVLRLAAYELLYRQDVPYRVVINEAIETAKRFGSEHGHTYVNGVLDRAAVEWRKVESGA</sequence>
<proteinExistence type="inferred from homology"/>